<geneLocation type="plasmid">
    <name>pRSPA01</name>
</geneLocation>
<dbReference type="EC" id="1.17.99.9" evidence="1"/>
<dbReference type="EMBL" id="CP000662">
    <property type="protein sequence ID" value="ABP72669.1"/>
    <property type="molecule type" value="Genomic_DNA"/>
</dbReference>
<dbReference type="SMR" id="A4WZ55"/>
<dbReference type="KEGG" id="rsq:Rsph17025_3812"/>
<dbReference type="HOGENOM" id="CLU_017627_0_0_5"/>
<dbReference type="BioCyc" id="RSPH349102:G1G8M-3926-MONOMER"/>
<dbReference type="UniPathway" id="UPA00269">
    <property type="reaction ID" value="UER00713"/>
</dbReference>
<dbReference type="GO" id="GO:0005886">
    <property type="term" value="C:plasma membrane"/>
    <property type="evidence" value="ECO:0007669"/>
    <property type="project" value="UniProtKB-SubCell"/>
</dbReference>
<dbReference type="GO" id="GO:0046872">
    <property type="term" value="F:metal ion binding"/>
    <property type="evidence" value="ECO:0007669"/>
    <property type="project" value="UniProtKB-KW"/>
</dbReference>
<dbReference type="GO" id="GO:0016653">
    <property type="term" value="F:oxidoreductase activity, acting on NAD(P)H, heme protein as acceptor"/>
    <property type="evidence" value="ECO:0007669"/>
    <property type="project" value="InterPro"/>
</dbReference>
<dbReference type="GO" id="GO:0006784">
    <property type="term" value="P:heme A biosynthetic process"/>
    <property type="evidence" value="ECO:0007669"/>
    <property type="project" value="UniProtKB-UniRule"/>
</dbReference>
<dbReference type="HAMAP" id="MF_01665">
    <property type="entry name" value="HemeA_synth_type2"/>
    <property type="match status" value="1"/>
</dbReference>
<dbReference type="InterPro" id="IPR003780">
    <property type="entry name" value="COX15/CtaA_fam"/>
</dbReference>
<dbReference type="InterPro" id="IPR054616">
    <property type="entry name" value="HemA_synt_rhodobact"/>
</dbReference>
<dbReference type="InterPro" id="IPR023754">
    <property type="entry name" value="HemeA_Synthase_type2"/>
</dbReference>
<dbReference type="NCBIfam" id="NF045570">
    <property type="entry name" value="HemSynCtaAAlphapr"/>
    <property type="match status" value="1"/>
</dbReference>
<dbReference type="PANTHER" id="PTHR23289">
    <property type="entry name" value="CYTOCHROME C OXIDASE ASSEMBLY PROTEIN COX15"/>
    <property type="match status" value="1"/>
</dbReference>
<dbReference type="PANTHER" id="PTHR23289:SF2">
    <property type="entry name" value="CYTOCHROME C OXIDASE ASSEMBLY PROTEIN COX15 HOMOLOG"/>
    <property type="match status" value="1"/>
</dbReference>
<dbReference type="Pfam" id="PF02628">
    <property type="entry name" value="COX15-CtaA"/>
    <property type="match status" value="1"/>
</dbReference>
<evidence type="ECO:0000255" key="1">
    <source>
        <dbReference type="HAMAP-Rule" id="MF_01665"/>
    </source>
</evidence>
<feature type="chain" id="PRO_0000349064" description="Heme A synthase">
    <location>
        <begin position="1"/>
        <end position="391"/>
    </location>
</feature>
<feature type="transmembrane region" description="Helical" evidence="1">
    <location>
        <begin position="37"/>
        <end position="57"/>
    </location>
</feature>
<feature type="transmembrane region" description="Helical" evidence="1">
    <location>
        <begin position="121"/>
        <end position="141"/>
    </location>
</feature>
<feature type="transmembrane region" description="Helical" evidence="1">
    <location>
        <begin position="152"/>
        <end position="172"/>
    </location>
</feature>
<feature type="transmembrane region" description="Helical" evidence="1">
    <location>
        <begin position="186"/>
        <end position="206"/>
    </location>
</feature>
<feature type="transmembrane region" description="Helical" evidence="1">
    <location>
        <begin position="229"/>
        <end position="249"/>
    </location>
</feature>
<feature type="transmembrane region" description="Helical" evidence="1">
    <location>
        <begin position="298"/>
        <end position="318"/>
    </location>
</feature>
<feature type="transmembrane region" description="Helical" evidence="1">
    <location>
        <begin position="332"/>
        <end position="352"/>
    </location>
</feature>
<feature type="transmembrane region" description="Helical" evidence="1">
    <location>
        <begin position="354"/>
        <end position="374"/>
    </location>
</feature>
<feature type="binding site" description="axial binding residue" evidence="1">
    <location>
        <position position="300"/>
    </location>
    <ligand>
        <name>heme</name>
        <dbReference type="ChEBI" id="CHEBI:30413"/>
    </ligand>
    <ligandPart>
        <name>Fe</name>
        <dbReference type="ChEBI" id="CHEBI:18248"/>
    </ligandPart>
</feature>
<feature type="binding site" description="axial binding residue" evidence="1">
    <location>
        <position position="360"/>
    </location>
    <ligand>
        <name>heme</name>
        <dbReference type="ChEBI" id="CHEBI:30413"/>
    </ligand>
    <ligandPart>
        <name>Fe</name>
        <dbReference type="ChEBI" id="CHEBI:18248"/>
    </ligandPart>
</feature>
<sequence>MAVKKRSIFEEVGQGAKAPVPQGGSIDRGQGGARRGIRLWLMALFVLVMAMIVVGGLTRLTDSGLSITEWRPVTGAVPPLNEAEWTAEFEKYRQSPQYRLMNAGMSMAEFQRIYWWEWGHRQLGRVIGLVWAVGFLGFLVARKMPRGWWPRLLALGVLGGIQGGIGWWMVASGLEGDRVAVESTRLAVHLSLAFIILGMIAWQALLLGRTEAELFQARRQREGRLYGMTTVLIVVAFLQVVLGALVAGIDAGRGFPTWPDMNGTFLPADMLYVPGVETDWRNPAWWLGLLQNPGFVQFLHRMAGYALVALGLVFWIFGRRTKHRATRGAFDLLALALLAQVALGVGTVLSAAEWQVAIAHQVGAVVIWVLILHARHLAHYPRVGSIRKGTL</sequence>
<organism>
    <name type="scientific">Cereibacter sphaeroides (strain ATCC 17025 / ATH 2.4.3)</name>
    <name type="common">Rhodobacter sphaeroides</name>
    <dbReference type="NCBI Taxonomy" id="349102"/>
    <lineage>
        <taxon>Bacteria</taxon>
        <taxon>Pseudomonadati</taxon>
        <taxon>Pseudomonadota</taxon>
        <taxon>Alphaproteobacteria</taxon>
        <taxon>Rhodobacterales</taxon>
        <taxon>Paracoccaceae</taxon>
        <taxon>Cereibacter</taxon>
    </lineage>
</organism>
<protein>
    <recommendedName>
        <fullName evidence="1">Heme A synthase</fullName>
        <shortName evidence="1">HAS</shortName>
        <ecNumber evidence="1">1.17.99.9</ecNumber>
    </recommendedName>
    <alternativeName>
        <fullName evidence="1">Cytochrome aa3-controlling protein</fullName>
    </alternativeName>
</protein>
<keyword id="KW-1003">Cell membrane</keyword>
<keyword id="KW-0350">Heme biosynthesis</keyword>
<keyword id="KW-0408">Iron</keyword>
<keyword id="KW-0472">Membrane</keyword>
<keyword id="KW-0479">Metal-binding</keyword>
<keyword id="KW-0560">Oxidoreductase</keyword>
<keyword id="KW-0614">Plasmid</keyword>
<keyword id="KW-0812">Transmembrane</keyword>
<keyword id="KW-1133">Transmembrane helix</keyword>
<reference key="1">
    <citation type="submission" date="2007-04" db="EMBL/GenBank/DDBJ databases">
        <title>Complete sequence of plasmid pRSPA01 of Rhodobacter sphaeroides ATCC 17025.</title>
        <authorList>
            <consortium name="US DOE Joint Genome Institute"/>
            <person name="Copeland A."/>
            <person name="Lucas S."/>
            <person name="Lapidus A."/>
            <person name="Barry K."/>
            <person name="Detter J.C."/>
            <person name="Glavina del Rio T."/>
            <person name="Hammon N."/>
            <person name="Israni S."/>
            <person name="Dalin E."/>
            <person name="Tice H."/>
            <person name="Pitluck S."/>
            <person name="Chertkov O."/>
            <person name="Brettin T."/>
            <person name="Bruce D."/>
            <person name="Han C."/>
            <person name="Schmutz J."/>
            <person name="Larimer F."/>
            <person name="Land M."/>
            <person name="Hauser L."/>
            <person name="Kyrpides N."/>
            <person name="Kim E."/>
            <person name="Richardson P."/>
            <person name="Mackenzie C."/>
            <person name="Choudhary M."/>
            <person name="Donohue T.J."/>
            <person name="Kaplan S."/>
        </authorList>
    </citation>
    <scope>NUCLEOTIDE SEQUENCE [LARGE SCALE GENOMIC DNA]</scope>
    <source>
        <strain>ATCC 17025 / ATH 2.4.3</strain>
    </source>
</reference>
<comment type="function">
    <text evidence="1">Catalyzes the conversion of heme O to heme A by two successive hydroxylations of the methyl group at C8. The first hydroxylation forms heme I, the second hydroxylation results in an unstable dihydroxymethyl group, which spontaneously dehydrates, resulting in the formyl group of heme A.</text>
</comment>
<comment type="catalytic activity">
    <reaction evidence="1">
        <text>Fe(II)-heme o + 2 A + H2O = Fe(II)-heme a + 2 AH2</text>
        <dbReference type="Rhea" id="RHEA:63388"/>
        <dbReference type="ChEBI" id="CHEBI:13193"/>
        <dbReference type="ChEBI" id="CHEBI:15377"/>
        <dbReference type="ChEBI" id="CHEBI:17499"/>
        <dbReference type="ChEBI" id="CHEBI:60530"/>
        <dbReference type="ChEBI" id="CHEBI:61715"/>
        <dbReference type="EC" id="1.17.99.9"/>
    </reaction>
    <physiologicalReaction direction="left-to-right" evidence="1">
        <dbReference type="Rhea" id="RHEA:63389"/>
    </physiologicalReaction>
</comment>
<comment type="cofactor">
    <cofactor evidence="1">
        <name>heme b</name>
        <dbReference type="ChEBI" id="CHEBI:60344"/>
    </cofactor>
</comment>
<comment type="pathway">
    <text evidence="1">Porphyrin-containing compound metabolism; heme A biosynthesis; heme A from heme O: step 1/1.</text>
</comment>
<comment type="subunit">
    <text evidence="1">Interacts with CtaB.</text>
</comment>
<comment type="subcellular location">
    <subcellularLocation>
        <location evidence="1">Cell membrane</location>
        <topology evidence="1">Multi-pass membrane protein</topology>
    </subcellularLocation>
</comment>
<comment type="similarity">
    <text evidence="1">Belongs to the COX15/CtaA family. Type 2 subfamily.</text>
</comment>
<name>CTAA_CERS5</name>
<gene>
    <name evidence="1" type="primary">ctaA</name>
    <name type="ordered locus">Rsph17025_3812</name>
</gene>
<proteinExistence type="inferred from homology"/>
<accession>A4WZ55</accession>